<gene>
    <name type="ordered locus">At1g31020</name>
    <name type="ORF">F17F8.6</name>
</gene>
<organism>
    <name type="scientific">Arabidopsis thaliana</name>
    <name type="common">Mouse-ear cress</name>
    <dbReference type="NCBI Taxonomy" id="3702"/>
    <lineage>
        <taxon>Eukaryota</taxon>
        <taxon>Viridiplantae</taxon>
        <taxon>Streptophyta</taxon>
        <taxon>Embryophyta</taxon>
        <taxon>Tracheophyta</taxon>
        <taxon>Spermatophyta</taxon>
        <taxon>Magnoliopsida</taxon>
        <taxon>eudicotyledons</taxon>
        <taxon>Gunneridae</taxon>
        <taxon>Pentapetalae</taxon>
        <taxon>rosids</taxon>
        <taxon>malvids</taxon>
        <taxon>Brassicales</taxon>
        <taxon>Brassicaceae</taxon>
        <taxon>Camelineae</taxon>
        <taxon>Arabidopsis</taxon>
    </lineage>
</organism>
<keyword id="KW-0002">3D-structure</keyword>
<keyword id="KW-1015">Disulfide bond</keyword>
<keyword id="KW-0249">Electron transport</keyword>
<keyword id="KW-0496">Mitochondrion</keyword>
<keyword id="KW-0597">Phosphoprotein</keyword>
<keyword id="KW-0676">Redox-active center</keyword>
<keyword id="KW-1185">Reference proteome</keyword>
<keyword id="KW-0809">Transit peptide</keyword>
<keyword id="KW-0813">Transport</keyword>
<feature type="transit peptide" description="Mitochondrion" evidence="3">
    <location>
        <begin position="1"/>
        <end status="unknown"/>
    </location>
</feature>
<feature type="chain" id="PRO_0000394538" description="Thioredoxin O2, mitochondrial">
    <location>
        <begin status="unknown"/>
        <end position="159"/>
    </location>
</feature>
<feature type="domain" description="Thioredoxin" evidence="4">
    <location>
        <begin position="43"/>
        <end position="159"/>
    </location>
</feature>
<feature type="active site" description="Nucleophile" evidence="1">
    <location>
        <position position="83"/>
    </location>
</feature>
<feature type="active site" description="Nucleophile" evidence="1">
    <location>
        <position position="86"/>
    </location>
</feature>
<feature type="site" description="Contributes to redox potential value" evidence="1">
    <location>
        <position position="84"/>
    </location>
</feature>
<feature type="site" description="Contributes to redox potential value" evidence="1">
    <location>
        <position position="85"/>
    </location>
</feature>
<feature type="modified residue" description="Phosphoserine" evidence="2">
    <location>
        <position position="40"/>
    </location>
</feature>
<feature type="disulfide bond" description="Redox-active" evidence="4">
    <location>
        <begin position="83"/>
        <end position="86"/>
    </location>
</feature>
<feature type="helix" evidence="7">
    <location>
        <begin position="48"/>
        <end position="50"/>
    </location>
</feature>
<feature type="strand" evidence="7">
    <location>
        <begin position="51"/>
        <end position="53"/>
    </location>
</feature>
<feature type="helix" evidence="7">
    <location>
        <begin position="57"/>
        <end position="67"/>
    </location>
</feature>
<feature type="turn" evidence="7">
    <location>
        <begin position="68"/>
        <end position="70"/>
    </location>
</feature>
<feature type="strand" evidence="7">
    <location>
        <begin position="74"/>
        <end position="79"/>
    </location>
</feature>
<feature type="helix" evidence="7">
    <location>
        <begin position="85"/>
        <end position="88"/>
    </location>
</feature>
<feature type="helix" evidence="7">
    <location>
        <begin position="89"/>
        <end position="97"/>
    </location>
</feature>
<feature type="strand" evidence="7">
    <location>
        <begin position="104"/>
        <end position="109"/>
    </location>
</feature>
<feature type="helix" evidence="7">
    <location>
        <begin position="115"/>
        <end position="117"/>
    </location>
</feature>
<feature type="helix" evidence="7">
    <location>
        <begin position="118"/>
        <end position="121"/>
    </location>
</feature>
<feature type="strand" evidence="7">
    <location>
        <begin position="126"/>
        <end position="134"/>
    </location>
</feature>
<feature type="strand" evidence="7">
    <location>
        <begin position="137"/>
        <end position="145"/>
    </location>
</feature>
<feature type="helix" evidence="7">
    <location>
        <begin position="147"/>
        <end position="158"/>
    </location>
</feature>
<proteinExistence type="evidence at protein level"/>
<protein>
    <recommendedName>
        <fullName>Thioredoxin O2, mitochondrial</fullName>
        <shortName>AtTrxo2</shortName>
    </recommendedName>
</protein>
<comment type="function">
    <text evidence="5">Thiol-disulfide oxidoreductase that may participate in various redox reactions. Possesses insulin disulfide bonds reducing activity. Reduced by thioredoxin reductases NTRA and NTRB.</text>
</comment>
<comment type="subcellular location">
    <subcellularLocation>
        <location evidence="1">Mitochondrion</location>
    </subcellularLocation>
</comment>
<comment type="similarity">
    <text evidence="6">Belongs to the thioredoxin family. Plant O-type subfamily.</text>
</comment>
<comment type="sequence caution" evidence="6">
    <conflict type="erroneous gene model prediction">
        <sequence resource="EMBL-CDS" id="AAF98203"/>
    </conflict>
</comment>
<name>TRXO2_ARATH</name>
<reference key="1">
    <citation type="journal article" date="2001" name="Proc. Natl. Acad. Sci. U.S.A.">
        <title>Identification and characterization of a mitochondrial thioredoxin system in plants.</title>
        <authorList>
            <person name="Laloi C."/>
            <person name="Rayapuram N."/>
            <person name="Chartier Y."/>
            <person name="Grienenberger J.M."/>
            <person name="Bonnard G."/>
            <person name="Meyer Y."/>
        </authorList>
    </citation>
    <scope>NUCLEOTIDE SEQUENCE [MRNA]</scope>
    <scope>FUNCTION</scope>
</reference>
<reference key="2">
    <citation type="journal article" date="2000" name="Nature">
        <title>Sequence and analysis of chromosome 1 of the plant Arabidopsis thaliana.</title>
        <authorList>
            <person name="Theologis A."/>
            <person name="Ecker J.R."/>
            <person name="Palm C.J."/>
            <person name="Federspiel N.A."/>
            <person name="Kaul S."/>
            <person name="White O."/>
            <person name="Alonso J."/>
            <person name="Altafi H."/>
            <person name="Araujo R."/>
            <person name="Bowman C.L."/>
            <person name="Brooks S.Y."/>
            <person name="Buehler E."/>
            <person name="Chan A."/>
            <person name="Chao Q."/>
            <person name="Chen H."/>
            <person name="Cheuk R.F."/>
            <person name="Chin C.W."/>
            <person name="Chung M.K."/>
            <person name="Conn L."/>
            <person name="Conway A.B."/>
            <person name="Conway A.R."/>
            <person name="Creasy T.H."/>
            <person name="Dewar K."/>
            <person name="Dunn P."/>
            <person name="Etgu P."/>
            <person name="Feldblyum T.V."/>
            <person name="Feng J.-D."/>
            <person name="Fong B."/>
            <person name="Fujii C.Y."/>
            <person name="Gill J.E."/>
            <person name="Goldsmith A.D."/>
            <person name="Haas B."/>
            <person name="Hansen N.F."/>
            <person name="Hughes B."/>
            <person name="Huizar L."/>
            <person name="Hunter J.L."/>
            <person name="Jenkins J."/>
            <person name="Johnson-Hopson C."/>
            <person name="Khan S."/>
            <person name="Khaykin E."/>
            <person name="Kim C.J."/>
            <person name="Koo H.L."/>
            <person name="Kremenetskaia I."/>
            <person name="Kurtz D.B."/>
            <person name="Kwan A."/>
            <person name="Lam B."/>
            <person name="Langin-Hooper S."/>
            <person name="Lee A."/>
            <person name="Lee J.M."/>
            <person name="Lenz C.A."/>
            <person name="Li J.H."/>
            <person name="Li Y.-P."/>
            <person name="Lin X."/>
            <person name="Liu S.X."/>
            <person name="Liu Z.A."/>
            <person name="Luros J.S."/>
            <person name="Maiti R."/>
            <person name="Marziali A."/>
            <person name="Militscher J."/>
            <person name="Miranda M."/>
            <person name="Nguyen M."/>
            <person name="Nierman W.C."/>
            <person name="Osborne B.I."/>
            <person name="Pai G."/>
            <person name="Peterson J."/>
            <person name="Pham P.K."/>
            <person name="Rizzo M."/>
            <person name="Rooney T."/>
            <person name="Rowley D."/>
            <person name="Sakano H."/>
            <person name="Salzberg S.L."/>
            <person name="Schwartz J.R."/>
            <person name="Shinn P."/>
            <person name="Southwick A.M."/>
            <person name="Sun H."/>
            <person name="Tallon L.J."/>
            <person name="Tambunga G."/>
            <person name="Toriumi M.J."/>
            <person name="Town C.D."/>
            <person name="Utterback T."/>
            <person name="Van Aken S."/>
            <person name="Vaysberg M."/>
            <person name="Vysotskaia V.S."/>
            <person name="Walker M."/>
            <person name="Wu D."/>
            <person name="Yu G."/>
            <person name="Fraser C.M."/>
            <person name="Venter J.C."/>
            <person name="Davis R.W."/>
        </authorList>
    </citation>
    <scope>NUCLEOTIDE SEQUENCE [LARGE SCALE GENOMIC DNA]</scope>
    <source>
        <strain>cv. Columbia</strain>
    </source>
</reference>
<reference key="3">
    <citation type="journal article" date="2017" name="Plant J.">
        <title>Araport11: a complete reannotation of the Arabidopsis thaliana reference genome.</title>
        <authorList>
            <person name="Cheng C.Y."/>
            <person name="Krishnakumar V."/>
            <person name="Chan A.P."/>
            <person name="Thibaud-Nissen F."/>
            <person name="Schobel S."/>
            <person name="Town C.D."/>
        </authorList>
    </citation>
    <scope>GENOME REANNOTATION</scope>
    <source>
        <strain>cv. Columbia</strain>
    </source>
</reference>
<reference key="4">
    <citation type="journal article" date="2003" name="Science">
        <title>Empirical analysis of transcriptional activity in the Arabidopsis genome.</title>
        <authorList>
            <person name="Yamada K."/>
            <person name="Lim J."/>
            <person name="Dale J.M."/>
            <person name="Chen H."/>
            <person name="Shinn P."/>
            <person name="Palm C.J."/>
            <person name="Southwick A.M."/>
            <person name="Wu H.C."/>
            <person name="Kim C.J."/>
            <person name="Nguyen M."/>
            <person name="Pham P.K."/>
            <person name="Cheuk R.F."/>
            <person name="Karlin-Newmann G."/>
            <person name="Liu S.X."/>
            <person name="Lam B."/>
            <person name="Sakano H."/>
            <person name="Wu T."/>
            <person name="Yu G."/>
            <person name="Miranda M."/>
            <person name="Quach H.L."/>
            <person name="Tripp M."/>
            <person name="Chang C.H."/>
            <person name="Lee J.M."/>
            <person name="Toriumi M.J."/>
            <person name="Chan M.M."/>
            <person name="Tang C.C."/>
            <person name="Onodera C.S."/>
            <person name="Deng J.M."/>
            <person name="Akiyama K."/>
            <person name="Ansari Y."/>
            <person name="Arakawa T."/>
            <person name="Banh J."/>
            <person name="Banno F."/>
            <person name="Bowser L."/>
            <person name="Brooks S.Y."/>
            <person name="Carninci P."/>
            <person name="Chao Q."/>
            <person name="Choy N."/>
            <person name="Enju A."/>
            <person name="Goldsmith A.D."/>
            <person name="Gurjal M."/>
            <person name="Hansen N.F."/>
            <person name="Hayashizaki Y."/>
            <person name="Johnson-Hopson C."/>
            <person name="Hsuan V.W."/>
            <person name="Iida K."/>
            <person name="Karnes M."/>
            <person name="Khan S."/>
            <person name="Koesema E."/>
            <person name="Ishida J."/>
            <person name="Jiang P.X."/>
            <person name="Jones T."/>
            <person name="Kawai J."/>
            <person name="Kamiya A."/>
            <person name="Meyers C."/>
            <person name="Nakajima M."/>
            <person name="Narusaka M."/>
            <person name="Seki M."/>
            <person name="Sakurai T."/>
            <person name="Satou M."/>
            <person name="Tamse R."/>
            <person name="Vaysberg M."/>
            <person name="Wallender E.K."/>
            <person name="Wong C."/>
            <person name="Yamamura Y."/>
            <person name="Yuan S."/>
            <person name="Shinozaki K."/>
            <person name="Davis R.W."/>
            <person name="Theologis A."/>
            <person name="Ecker J.R."/>
        </authorList>
    </citation>
    <scope>NUCLEOTIDE SEQUENCE [LARGE SCALE MRNA]</scope>
    <source>
        <strain>cv. Columbia</strain>
    </source>
</reference>
<reference key="5">
    <citation type="journal article" date="2009" name="Mol. Plant">
        <title>Comparative genomic study of the thioredoxin family in photosynthetic organisms with emphasis on Populus trichocarpa.</title>
        <authorList>
            <person name="Chibani K."/>
            <person name="Wingsle G."/>
            <person name="Jacquot J.P."/>
            <person name="Gelhaye E."/>
            <person name="Rouhier N."/>
        </authorList>
    </citation>
    <scope>GENE FAMILY</scope>
    <scope>NOMENCLATURE</scope>
</reference>
<evidence type="ECO:0000250" key="1"/>
<evidence type="ECO:0000250" key="2">
    <source>
        <dbReference type="UniProtKB" id="Q9C9Y6"/>
    </source>
</evidence>
<evidence type="ECO:0000255" key="3"/>
<evidence type="ECO:0000255" key="4">
    <source>
        <dbReference type="PROSITE-ProRule" id="PRU00691"/>
    </source>
</evidence>
<evidence type="ECO:0000269" key="5">
    <source>
    </source>
</evidence>
<evidence type="ECO:0000305" key="6"/>
<evidence type="ECO:0007829" key="7">
    <source>
        <dbReference type="PDB" id="6G62"/>
    </source>
</evidence>
<sequence length="159" mass="17623">MKSQWSNFHQIGRNSFLAASTVYVSNEFNFLNTSLLNRRSFCFAEGDRSSFVVLKSEAEFNSALSKARDGSLPSVFYFTAAWCGPCRLISPVILELSNKYPDVTTYKVDIDEGGLSNAIGKLNVSAVPTLQFFKGGVKKAEIVGVDVVRLKSVMEQLYK</sequence>
<accession>Q93VQ9</accession>
<accession>Q9FYJ3</accession>
<dbReference type="EMBL" id="AF396650">
    <property type="protein sequence ID" value="AAK83918.1"/>
    <property type="molecule type" value="mRNA"/>
</dbReference>
<dbReference type="EMBL" id="AC000107">
    <property type="protein sequence ID" value="AAF98203.1"/>
    <property type="status" value="ALT_SEQ"/>
    <property type="molecule type" value="Genomic_DNA"/>
</dbReference>
<dbReference type="EMBL" id="CP002684">
    <property type="protein sequence ID" value="AEE31307.1"/>
    <property type="molecule type" value="Genomic_DNA"/>
</dbReference>
<dbReference type="EMBL" id="AY050435">
    <property type="protein sequence ID" value="AAK91451.1"/>
    <property type="molecule type" value="mRNA"/>
</dbReference>
<dbReference type="EMBL" id="AY093796">
    <property type="protein sequence ID" value="AAM10412.1"/>
    <property type="molecule type" value="mRNA"/>
</dbReference>
<dbReference type="RefSeq" id="NP_564371.1">
    <property type="nucleotide sequence ID" value="NM_102840.5"/>
</dbReference>
<dbReference type="PDB" id="6G62">
    <property type="method" value="X-ray"/>
    <property type="resolution" value="1.50 A"/>
    <property type="chains" value="A=48-159"/>
</dbReference>
<dbReference type="PDBsum" id="6G62"/>
<dbReference type="SMR" id="Q93VQ9"/>
<dbReference type="FunCoup" id="Q93VQ9">
    <property type="interactions" value="321"/>
</dbReference>
<dbReference type="STRING" id="3702.Q93VQ9"/>
<dbReference type="PaxDb" id="3702-AT1G31020.1"/>
<dbReference type="ProteomicsDB" id="232419"/>
<dbReference type="EnsemblPlants" id="AT1G31020.1">
    <property type="protein sequence ID" value="AT1G31020.1"/>
    <property type="gene ID" value="AT1G31020"/>
</dbReference>
<dbReference type="GeneID" id="839988"/>
<dbReference type="Gramene" id="AT1G31020.1">
    <property type="protein sequence ID" value="AT1G31020.1"/>
    <property type="gene ID" value="AT1G31020"/>
</dbReference>
<dbReference type="KEGG" id="ath:AT1G31020"/>
<dbReference type="Araport" id="AT1G31020"/>
<dbReference type="TAIR" id="AT1G31020">
    <property type="gene designation" value="TO2"/>
</dbReference>
<dbReference type="eggNOG" id="KOG0907">
    <property type="taxonomic scope" value="Eukaryota"/>
</dbReference>
<dbReference type="HOGENOM" id="CLU_090389_6_1_1"/>
<dbReference type="InParanoid" id="Q93VQ9"/>
<dbReference type="OMA" id="FHQIGRN"/>
<dbReference type="OrthoDB" id="2121326at2759"/>
<dbReference type="PhylomeDB" id="Q93VQ9"/>
<dbReference type="PRO" id="PR:Q93VQ9"/>
<dbReference type="Proteomes" id="UP000006548">
    <property type="component" value="Chromosome 1"/>
</dbReference>
<dbReference type="ExpressionAtlas" id="Q93VQ9">
    <property type="expression patterns" value="baseline and differential"/>
</dbReference>
<dbReference type="GO" id="GO:0005739">
    <property type="term" value="C:mitochondrion"/>
    <property type="evidence" value="ECO:0007669"/>
    <property type="project" value="UniProtKB-SubCell"/>
</dbReference>
<dbReference type="GO" id="GO:0016671">
    <property type="term" value="F:oxidoreductase activity, acting on a sulfur group of donors, disulfide as acceptor"/>
    <property type="evidence" value="ECO:0000314"/>
    <property type="project" value="UniProtKB"/>
</dbReference>
<dbReference type="CDD" id="cd02947">
    <property type="entry name" value="TRX_family"/>
    <property type="match status" value="1"/>
</dbReference>
<dbReference type="FunFam" id="3.40.30.10:FF:000245">
    <property type="entry name" value="Thioredoxin"/>
    <property type="match status" value="1"/>
</dbReference>
<dbReference type="Gene3D" id="3.40.30.10">
    <property type="entry name" value="Glutaredoxin"/>
    <property type="match status" value="1"/>
</dbReference>
<dbReference type="InterPro" id="IPR036249">
    <property type="entry name" value="Thioredoxin-like_sf"/>
</dbReference>
<dbReference type="InterPro" id="IPR013766">
    <property type="entry name" value="Thioredoxin_domain"/>
</dbReference>
<dbReference type="PANTHER" id="PTHR46115">
    <property type="entry name" value="THIOREDOXIN-LIKE PROTEIN 1"/>
    <property type="match status" value="1"/>
</dbReference>
<dbReference type="Pfam" id="PF00085">
    <property type="entry name" value="Thioredoxin"/>
    <property type="match status" value="1"/>
</dbReference>
<dbReference type="PRINTS" id="PR00421">
    <property type="entry name" value="THIOREDOXIN"/>
</dbReference>
<dbReference type="SUPFAM" id="SSF52833">
    <property type="entry name" value="Thioredoxin-like"/>
    <property type="match status" value="1"/>
</dbReference>
<dbReference type="PROSITE" id="PS51352">
    <property type="entry name" value="THIOREDOXIN_2"/>
    <property type="match status" value="1"/>
</dbReference>